<protein>
    <recommendedName>
        <fullName>Putative antiporter subunit mnhA2</fullName>
    </recommendedName>
    <alternativeName>
        <fullName>Mrp complex subunit A2</fullName>
    </alternativeName>
    <alternativeName>
        <fullName>Putative NADH-ubiquinone oxidoreductase subunit mnhA2</fullName>
    </alternativeName>
</protein>
<sequence length="800" mass="89141">MSLVYLLGGLIVIMLIVLMTLFIKSLRRFAGYIALLAPILASGYFLAQIPNVLHGKFVEFKIPWMPAIDVNLDFRLDGLGLMFGLIISIIGVAVFFYATQYLSVNRDNLPRFFLYLLLFMFSMLGIVVSNNTILMYVFWELTSVSSFLLISYWYSNAESQLGAIQSFIITVLGGLALLTGFIMLYIITGTNTISELLTQSHSISEHALFIPMMIMLLIGAFTKSAQFPFHIWLPKAMAAPTPVSAYLHSATMVKAGIFLLFKFTPILGLSDSYIYIVTFVGLITMIFGSVTALRQYDLKGILAYSTISQLGMIMSMVGLGGGIAQHSSGPMAETYTLILFAGLFHLMNHAIFKCALFMGVGIIDHEAGTRDIRRLSGMRKFFPKMNLVMTLAALSMAGVPLLNGFLSKEMFFDSLVSAIELQQFGLTLTIIVVAIGVIASIFTFVYAVYMLKETYWGEFDEKKVPKKHIHEPWLFSLPAIILMVMIPIIFFIPNFFTEHLVLPALRNVTNLGSSVDAIAPHVSQWHGVNLPLIFSVIVIIVGLILALKVNWKAITHQVIKYASITNSYRNVYRGFERYSGQMIRGLMNNRLNHYNIITVLIFSILIAYGIFQVGLPKLHQIEVSEFGPLEVILGIMISVVGIALVFIRQRLTMVILNGIIGYSVALFFLLMRAPDLALTQLVVETITTILFIVSFSRLPNIARTTANMKKETIKIIVSFIMAGAVVTLIFIAQQGDGLESISKYYTNAYELTGGKNIVNAILGDFRALDTMFEGIVLIIAGLGIYTLLHYKDRRGQDERK</sequence>
<reference key="1">
    <citation type="journal article" date="2005" name="J. Bacteriol.">
        <title>Whole-genome sequencing of Staphylococcus haemolyticus uncovers the extreme plasticity of its genome and the evolution of human-colonizing staphylococcal species.</title>
        <authorList>
            <person name="Takeuchi F."/>
            <person name="Watanabe S."/>
            <person name="Baba T."/>
            <person name="Yuzawa H."/>
            <person name="Ito T."/>
            <person name="Morimoto Y."/>
            <person name="Kuroda M."/>
            <person name="Cui L."/>
            <person name="Takahashi M."/>
            <person name="Ankai A."/>
            <person name="Baba S."/>
            <person name="Fukui S."/>
            <person name="Lee J.C."/>
            <person name="Hiramatsu K."/>
        </authorList>
    </citation>
    <scope>NUCLEOTIDE SEQUENCE [LARGE SCALE GENOMIC DNA]</scope>
    <source>
        <strain>JCSC1435</strain>
    </source>
</reference>
<comment type="subunit">
    <text evidence="1">May form a heterooligomeric complex that consists of seven subunits: mnhA2, mnhB2, mnhC2, mnhD2, mnhE2, mnhF2 and mnhG2.</text>
</comment>
<comment type="subcellular location">
    <subcellularLocation>
        <location evidence="3">Cell membrane</location>
        <topology evidence="3">Multi-pass membrane protein</topology>
    </subcellularLocation>
</comment>
<comment type="similarity">
    <text evidence="3">Belongs to the CPA3 antiporters (TC 2.A.63) subunit A family.</text>
</comment>
<evidence type="ECO:0000250" key="1"/>
<evidence type="ECO:0000255" key="2"/>
<evidence type="ECO:0000305" key="3"/>
<keyword id="KW-0050">Antiport</keyword>
<keyword id="KW-1003">Cell membrane</keyword>
<keyword id="KW-0406">Ion transport</keyword>
<keyword id="KW-0472">Membrane</keyword>
<keyword id="KW-0812">Transmembrane</keyword>
<keyword id="KW-1133">Transmembrane helix</keyword>
<keyword id="KW-0813">Transport</keyword>
<proteinExistence type="inferred from homology"/>
<accession>Q4L443</accession>
<feature type="chain" id="PRO_0000372300" description="Putative antiporter subunit mnhA2">
    <location>
        <begin position="1"/>
        <end position="800"/>
    </location>
</feature>
<feature type="transmembrane region" description="Helical" evidence="2">
    <location>
        <begin position="3"/>
        <end position="23"/>
    </location>
</feature>
<feature type="transmembrane region" description="Helical" evidence="2">
    <location>
        <begin position="29"/>
        <end position="49"/>
    </location>
</feature>
<feature type="transmembrane region" description="Helical" evidence="2">
    <location>
        <begin position="78"/>
        <end position="98"/>
    </location>
</feature>
<feature type="transmembrane region" description="Helical" evidence="2">
    <location>
        <begin position="109"/>
        <end position="129"/>
    </location>
</feature>
<feature type="transmembrane region" description="Helical" evidence="2">
    <location>
        <begin position="133"/>
        <end position="153"/>
    </location>
</feature>
<feature type="transmembrane region" description="Helical" evidence="2">
    <location>
        <begin position="167"/>
        <end position="187"/>
    </location>
</feature>
<feature type="transmembrane region" description="Helical" evidence="2">
    <location>
        <begin position="202"/>
        <end position="222"/>
    </location>
</feature>
<feature type="transmembrane region" description="Helical" evidence="2">
    <location>
        <begin position="249"/>
        <end position="269"/>
    </location>
</feature>
<feature type="transmembrane region" description="Helical" evidence="2">
    <location>
        <begin position="273"/>
        <end position="293"/>
    </location>
</feature>
<feature type="transmembrane region" description="Helical" evidence="2">
    <location>
        <begin position="300"/>
        <end position="320"/>
    </location>
</feature>
<feature type="transmembrane region" description="Helical" evidence="2">
    <location>
        <begin position="337"/>
        <end position="357"/>
    </location>
</feature>
<feature type="transmembrane region" description="Helical" evidence="2">
    <location>
        <begin position="387"/>
        <end position="407"/>
    </location>
</feature>
<feature type="transmembrane region" description="Helical" evidence="2">
    <location>
        <begin position="428"/>
        <end position="448"/>
    </location>
</feature>
<feature type="transmembrane region" description="Helical" evidence="2">
    <location>
        <begin position="472"/>
        <end position="492"/>
    </location>
</feature>
<feature type="transmembrane region" description="Helical" evidence="2">
    <location>
        <begin position="527"/>
        <end position="547"/>
    </location>
</feature>
<feature type="transmembrane region" description="Helical" evidence="2">
    <location>
        <begin position="596"/>
        <end position="616"/>
    </location>
</feature>
<feature type="transmembrane region" description="Helical" evidence="2">
    <location>
        <begin position="627"/>
        <end position="647"/>
    </location>
</feature>
<feature type="transmembrane region" description="Helical" evidence="2">
    <location>
        <begin position="651"/>
        <end position="671"/>
    </location>
</feature>
<feature type="transmembrane region" description="Helical" evidence="2">
    <location>
        <begin position="676"/>
        <end position="696"/>
    </location>
</feature>
<feature type="transmembrane region" description="Helical" evidence="2">
    <location>
        <begin position="712"/>
        <end position="732"/>
    </location>
</feature>
<feature type="transmembrane region" description="Helical" evidence="2">
    <location>
        <begin position="768"/>
        <end position="788"/>
    </location>
</feature>
<dbReference type="EMBL" id="AP006716">
    <property type="protein sequence ID" value="BAE05584.1"/>
    <property type="molecule type" value="Genomic_DNA"/>
</dbReference>
<dbReference type="RefSeq" id="WP_011276534.1">
    <property type="nucleotide sequence ID" value="NC_007168.1"/>
</dbReference>
<dbReference type="SMR" id="Q4L443"/>
<dbReference type="KEGG" id="sha:SH2275"/>
<dbReference type="eggNOG" id="COG1009">
    <property type="taxonomic scope" value="Bacteria"/>
</dbReference>
<dbReference type="eggNOG" id="COG2111">
    <property type="taxonomic scope" value="Bacteria"/>
</dbReference>
<dbReference type="HOGENOM" id="CLU_007100_2_1_9"/>
<dbReference type="OrthoDB" id="9807568at2"/>
<dbReference type="Proteomes" id="UP000000543">
    <property type="component" value="Chromosome"/>
</dbReference>
<dbReference type="GO" id="GO:0005886">
    <property type="term" value="C:plasma membrane"/>
    <property type="evidence" value="ECO:0007669"/>
    <property type="project" value="UniProtKB-SubCell"/>
</dbReference>
<dbReference type="GO" id="GO:0015297">
    <property type="term" value="F:antiporter activity"/>
    <property type="evidence" value="ECO:0007669"/>
    <property type="project" value="UniProtKB-KW"/>
</dbReference>
<dbReference type="GO" id="GO:0006811">
    <property type="term" value="P:monoatomic ion transport"/>
    <property type="evidence" value="ECO:0007669"/>
    <property type="project" value="UniProtKB-KW"/>
</dbReference>
<dbReference type="InterPro" id="IPR050616">
    <property type="entry name" value="CPA3_Na-H_Antiporter_A"/>
</dbReference>
<dbReference type="InterPro" id="IPR025383">
    <property type="entry name" value="MrpA_C/MbhD"/>
</dbReference>
<dbReference type="InterPro" id="IPR046806">
    <property type="entry name" value="MrpA_C/MbhE"/>
</dbReference>
<dbReference type="InterPro" id="IPR001750">
    <property type="entry name" value="ND/Mrp_TM"/>
</dbReference>
<dbReference type="InterPro" id="IPR001516">
    <property type="entry name" value="Proton_antipo_N"/>
</dbReference>
<dbReference type="NCBIfam" id="NF009286">
    <property type="entry name" value="PRK12646.1"/>
    <property type="match status" value="1"/>
</dbReference>
<dbReference type="PANTHER" id="PTHR43373">
    <property type="entry name" value="NA(+)/H(+) ANTIPORTER SUBUNIT"/>
    <property type="match status" value="1"/>
</dbReference>
<dbReference type="PANTHER" id="PTHR43373:SF1">
    <property type="entry name" value="NA(+)_H(+) ANTIPORTER SUBUNIT A"/>
    <property type="match status" value="1"/>
</dbReference>
<dbReference type="Pfam" id="PF13244">
    <property type="entry name" value="MbhD"/>
    <property type="match status" value="1"/>
</dbReference>
<dbReference type="Pfam" id="PF20501">
    <property type="entry name" value="MbhE"/>
    <property type="match status" value="1"/>
</dbReference>
<dbReference type="Pfam" id="PF00361">
    <property type="entry name" value="Proton_antipo_M"/>
    <property type="match status" value="1"/>
</dbReference>
<dbReference type="Pfam" id="PF00662">
    <property type="entry name" value="Proton_antipo_N"/>
    <property type="match status" value="1"/>
</dbReference>
<dbReference type="PRINTS" id="PR01434">
    <property type="entry name" value="NADHDHGNASE5"/>
</dbReference>
<name>MNHA2_STAHJ</name>
<organism>
    <name type="scientific">Staphylococcus haemolyticus (strain JCSC1435)</name>
    <dbReference type="NCBI Taxonomy" id="279808"/>
    <lineage>
        <taxon>Bacteria</taxon>
        <taxon>Bacillati</taxon>
        <taxon>Bacillota</taxon>
        <taxon>Bacilli</taxon>
        <taxon>Bacillales</taxon>
        <taxon>Staphylococcaceae</taxon>
        <taxon>Staphylococcus</taxon>
    </lineage>
</organism>
<gene>
    <name type="primary">mnhA2</name>
    <name type="synonym">mrpA2</name>
    <name type="ordered locus">SH2275</name>
</gene>